<reference key="1">
    <citation type="journal article" date="2007" name="Proc. Natl. Acad. Sci. U.S.A.">
        <title>Genome sequencing and comparative analysis of Saccharomyces cerevisiae strain YJM789.</title>
        <authorList>
            <person name="Wei W."/>
            <person name="McCusker J.H."/>
            <person name="Hyman R.W."/>
            <person name="Jones T."/>
            <person name="Ning Y."/>
            <person name="Cao Z."/>
            <person name="Gu Z."/>
            <person name="Bruno D."/>
            <person name="Miranda M."/>
            <person name="Nguyen M."/>
            <person name="Wilhelmy J."/>
            <person name="Komp C."/>
            <person name="Tamse R."/>
            <person name="Wang X."/>
            <person name="Jia P."/>
            <person name="Luedi P."/>
            <person name="Oefner P.J."/>
            <person name="David L."/>
            <person name="Dietrich F.S."/>
            <person name="Li Y."/>
            <person name="Davis R.W."/>
            <person name="Steinmetz L.M."/>
        </authorList>
    </citation>
    <scope>NUCLEOTIDE SEQUENCE [LARGE SCALE GENOMIC DNA]</scope>
    <source>
        <strain>YJM789</strain>
    </source>
</reference>
<comment type="function">
    <text evidence="1">Involved in DNA replication and cell separation during budding.</text>
</comment>
<comment type="subcellular location">
    <subcellularLocation>
        <location evidence="1">Cytoplasm</location>
    </subcellularLocation>
    <subcellularLocation>
        <location evidence="1">Nucleus</location>
    </subcellularLocation>
</comment>
<comment type="similarity">
    <text evidence="5">Belongs to the SDS23 family.</text>
</comment>
<gene>
    <name type="primary">SDS23</name>
    <name type="ORF">SCY_2003</name>
</gene>
<protein>
    <recommendedName>
        <fullName>Protein SDS23</fullName>
    </recommendedName>
</protein>
<feature type="chain" id="PRO_0000324963" description="Protein SDS23">
    <location>
        <begin position="1"/>
        <end position="527"/>
    </location>
</feature>
<feature type="domain" description="CBS 1" evidence="3">
    <location>
        <begin position="101"/>
        <end position="162"/>
    </location>
</feature>
<feature type="domain" description="CBS 2" evidence="3">
    <location>
        <begin position="185"/>
        <end position="243"/>
    </location>
</feature>
<feature type="domain" description="CBS 3" evidence="3">
    <location>
        <begin position="272"/>
        <end position="330"/>
    </location>
</feature>
<feature type="domain" description="CBS 4" evidence="3">
    <location>
        <begin position="335"/>
        <end position="391"/>
    </location>
</feature>
<feature type="region of interest" description="Disordered" evidence="4">
    <location>
        <begin position="1"/>
        <end position="75"/>
    </location>
</feature>
<feature type="region of interest" description="Disordered" evidence="4">
    <location>
        <begin position="385"/>
        <end position="481"/>
    </location>
</feature>
<feature type="compositionally biased region" description="Polar residues" evidence="4">
    <location>
        <begin position="21"/>
        <end position="31"/>
    </location>
</feature>
<feature type="compositionally biased region" description="Basic and acidic residues" evidence="4">
    <location>
        <begin position="32"/>
        <end position="48"/>
    </location>
</feature>
<feature type="compositionally biased region" description="Low complexity" evidence="4">
    <location>
        <begin position="52"/>
        <end position="61"/>
    </location>
</feature>
<feature type="compositionally biased region" description="Low complexity" evidence="4">
    <location>
        <begin position="391"/>
        <end position="417"/>
    </location>
</feature>
<feature type="compositionally biased region" description="Polar residues" evidence="4">
    <location>
        <begin position="418"/>
        <end position="449"/>
    </location>
</feature>
<feature type="compositionally biased region" description="Low complexity" evidence="4">
    <location>
        <begin position="450"/>
        <end position="462"/>
    </location>
</feature>
<feature type="modified residue" description="Phosphoserine" evidence="2">
    <location>
        <position position="9"/>
    </location>
</feature>
<feature type="modified residue" description="Phosphoserine" evidence="2">
    <location>
        <position position="42"/>
    </location>
</feature>
<feature type="modified residue" description="Phosphoserine" evidence="2">
    <location>
        <position position="46"/>
    </location>
</feature>
<feature type="modified residue" description="Phosphoserine" evidence="2">
    <location>
        <position position="430"/>
    </location>
</feature>
<proteinExistence type="inferred from homology"/>
<keyword id="KW-0129">CBS domain</keyword>
<keyword id="KW-0963">Cytoplasm</keyword>
<keyword id="KW-0539">Nucleus</keyword>
<keyword id="KW-0597">Phosphoprotein</keyword>
<keyword id="KW-0677">Repeat</keyword>
<sequence length="527" mass="58098">MPQNTRHTSIVEMLSTPPQLPNSTDLNSLSEQTDKNTEANKSDTESLHKSISKSSSSSSLSTLDNTEYSNNNGNSLSTLNSQNLLSVHRQEWQHTPLSNLVEQNKLIFIRGSISVEEAFNTLVKHQLTSLPVENFPGDMNCLTFDYNDLNAYLLLVLNRIKVSNDKITSDCQNGKSVPVGEIVKLTPKNPFYKLPETENLSTVIGILGSGVHRVAITNVEMTQIKGILSQRRLIKYLWENARSFPNLKPLLDSSLEELNIGVLNAARDKPTFKQSRVISIQGDEHLIMALHKMYVERISSIAVVDPQGNLIGNISVTDVKHVTRTSQYPLLHNTCRHFVSVILNLRGLETGKDSFPIFHVYPTSSLARTFAKLVATKSHRLWIVQPNDNQPTASSEKSSSPSPSTPPVTTLPSLASSYHSNTQSSRMANSPVLKSSDTSNNKINVNINLSGPSPSQPQSPSTAMPPPQSPSNCPASPTPAHFEKEYRTGKLIGVVSLTDILSVLARKQTHHKEIDPQMARKQRGHIG</sequence>
<accession>A6ZUC0</accession>
<dbReference type="EMBL" id="AAFW02000099">
    <property type="protein sequence ID" value="EDN62058.1"/>
    <property type="molecule type" value="Genomic_DNA"/>
</dbReference>
<dbReference type="SMR" id="A6ZUC0"/>
<dbReference type="HOGENOM" id="CLU_024459_1_1_1"/>
<dbReference type="Proteomes" id="UP000007060">
    <property type="component" value="Unassembled WGS sequence"/>
</dbReference>
<dbReference type="GO" id="GO:0005737">
    <property type="term" value="C:cytoplasm"/>
    <property type="evidence" value="ECO:0007669"/>
    <property type="project" value="UniProtKB-SubCell"/>
</dbReference>
<dbReference type="GO" id="GO:0005634">
    <property type="term" value="C:nucleus"/>
    <property type="evidence" value="ECO:0007669"/>
    <property type="project" value="UniProtKB-SubCell"/>
</dbReference>
<dbReference type="GO" id="GO:0004865">
    <property type="term" value="F:protein serine/threonine phosphatase inhibitor activity"/>
    <property type="evidence" value="ECO:0007669"/>
    <property type="project" value="TreeGrafter"/>
</dbReference>
<dbReference type="GO" id="GO:0042149">
    <property type="term" value="P:cellular response to glucose starvation"/>
    <property type="evidence" value="ECO:0007669"/>
    <property type="project" value="InterPro"/>
</dbReference>
<dbReference type="GO" id="GO:0030071">
    <property type="term" value="P:regulation of mitotic metaphase/anaphase transition"/>
    <property type="evidence" value="ECO:0007669"/>
    <property type="project" value="InterPro"/>
</dbReference>
<dbReference type="FunFam" id="3.10.580.10:FF:000035">
    <property type="entry name" value="Protein SDS23"/>
    <property type="match status" value="1"/>
</dbReference>
<dbReference type="FunFam" id="3.10.580.10:FF:000043">
    <property type="entry name" value="Sds23p"/>
    <property type="match status" value="1"/>
</dbReference>
<dbReference type="Gene3D" id="3.10.580.10">
    <property type="entry name" value="CBS-domain"/>
    <property type="match status" value="2"/>
</dbReference>
<dbReference type="InterPro" id="IPR050511">
    <property type="entry name" value="AMPK_gamma/SDS23_families"/>
</dbReference>
<dbReference type="InterPro" id="IPR000644">
    <property type="entry name" value="CBS_dom"/>
</dbReference>
<dbReference type="InterPro" id="IPR046342">
    <property type="entry name" value="CBS_dom_sf"/>
</dbReference>
<dbReference type="InterPro" id="IPR016711">
    <property type="entry name" value="Ssd23"/>
</dbReference>
<dbReference type="PANTHER" id="PTHR13780">
    <property type="entry name" value="AMP-ACTIVATED PROTEIN KINASE, GAMMA REGULATORY SUBUNIT"/>
    <property type="match status" value="1"/>
</dbReference>
<dbReference type="PANTHER" id="PTHR13780:SF36">
    <property type="entry name" value="CBS DOMAIN-CONTAINING PROTEIN"/>
    <property type="match status" value="1"/>
</dbReference>
<dbReference type="Pfam" id="PF00571">
    <property type="entry name" value="CBS"/>
    <property type="match status" value="1"/>
</dbReference>
<dbReference type="PIRSF" id="PIRSF018148">
    <property type="entry name" value="UCP018148_CBS_YBR214w"/>
    <property type="match status" value="1"/>
</dbReference>
<dbReference type="SMART" id="SM00116">
    <property type="entry name" value="CBS"/>
    <property type="match status" value="2"/>
</dbReference>
<dbReference type="SUPFAM" id="SSF54631">
    <property type="entry name" value="CBS-domain pair"/>
    <property type="match status" value="2"/>
</dbReference>
<dbReference type="PROSITE" id="PS51371">
    <property type="entry name" value="CBS"/>
    <property type="match status" value="3"/>
</dbReference>
<evidence type="ECO:0000250" key="1"/>
<evidence type="ECO:0000250" key="2">
    <source>
        <dbReference type="UniProtKB" id="P53172"/>
    </source>
</evidence>
<evidence type="ECO:0000255" key="3">
    <source>
        <dbReference type="PROSITE-ProRule" id="PRU00703"/>
    </source>
</evidence>
<evidence type="ECO:0000256" key="4">
    <source>
        <dbReference type="SAM" id="MobiDB-lite"/>
    </source>
</evidence>
<evidence type="ECO:0000305" key="5"/>
<name>SDS23_YEAS7</name>
<organism>
    <name type="scientific">Saccharomyces cerevisiae (strain YJM789)</name>
    <name type="common">Baker's yeast</name>
    <dbReference type="NCBI Taxonomy" id="307796"/>
    <lineage>
        <taxon>Eukaryota</taxon>
        <taxon>Fungi</taxon>
        <taxon>Dikarya</taxon>
        <taxon>Ascomycota</taxon>
        <taxon>Saccharomycotina</taxon>
        <taxon>Saccharomycetes</taxon>
        <taxon>Saccharomycetales</taxon>
        <taxon>Saccharomycetaceae</taxon>
        <taxon>Saccharomyces</taxon>
    </lineage>
</organism>